<reference key="1">
    <citation type="submission" date="2006-08" db="EMBL/GenBank/DDBJ databases">
        <title>Complete sequence of Shewanella sp. MR-4.</title>
        <authorList>
            <consortium name="US DOE Joint Genome Institute"/>
            <person name="Copeland A."/>
            <person name="Lucas S."/>
            <person name="Lapidus A."/>
            <person name="Barry K."/>
            <person name="Detter J.C."/>
            <person name="Glavina del Rio T."/>
            <person name="Hammon N."/>
            <person name="Israni S."/>
            <person name="Dalin E."/>
            <person name="Tice H."/>
            <person name="Pitluck S."/>
            <person name="Kiss H."/>
            <person name="Brettin T."/>
            <person name="Bruce D."/>
            <person name="Han C."/>
            <person name="Tapia R."/>
            <person name="Gilna P."/>
            <person name="Schmutz J."/>
            <person name="Larimer F."/>
            <person name="Land M."/>
            <person name="Hauser L."/>
            <person name="Kyrpides N."/>
            <person name="Mikhailova N."/>
            <person name="Nealson K."/>
            <person name="Konstantinidis K."/>
            <person name="Klappenbach J."/>
            <person name="Tiedje J."/>
            <person name="Richardson P."/>
        </authorList>
    </citation>
    <scope>NUCLEOTIDE SEQUENCE [LARGE SCALE GENOMIC DNA]</scope>
    <source>
        <strain>MR-4</strain>
    </source>
</reference>
<evidence type="ECO:0000255" key="1">
    <source>
        <dbReference type="HAMAP-Rule" id="MF_01590"/>
    </source>
</evidence>
<feature type="chain" id="PRO_0000313972" description="tRNA U34 carboxymethyltransferase">
    <location>
        <begin position="1"/>
        <end position="330"/>
    </location>
</feature>
<feature type="binding site" evidence="1">
    <location>
        <position position="91"/>
    </location>
    <ligand>
        <name>carboxy-S-adenosyl-L-methionine</name>
        <dbReference type="ChEBI" id="CHEBI:134278"/>
    </ligand>
</feature>
<feature type="binding site" evidence="1">
    <location>
        <position position="105"/>
    </location>
    <ligand>
        <name>carboxy-S-adenosyl-L-methionine</name>
        <dbReference type="ChEBI" id="CHEBI:134278"/>
    </ligand>
</feature>
<feature type="binding site" evidence="1">
    <location>
        <position position="110"/>
    </location>
    <ligand>
        <name>carboxy-S-adenosyl-L-methionine</name>
        <dbReference type="ChEBI" id="CHEBI:134278"/>
    </ligand>
</feature>
<feature type="binding site" evidence="1">
    <location>
        <position position="130"/>
    </location>
    <ligand>
        <name>carboxy-S-adenosyl-L-methionine</name>
        <dbReference type="ChEBI" id="CHEBI:134278"/>
    </ligand>
</feature>
<feature type="binding site" evidence="1">
    <location>
        <begin position="152"/>
        <end position="154"/>
    </location>
    <ligand>
        <name>carboxy-S-adenosyl-L-methionine</name>
        <dbReference type="ChEBI" id="CHEBI:134278"/>
    </ligand>
</feature>
<feature type="binding site" evidence="1">
    <location>
        <begin position="181"/>
        <end position="182"/>
    </location>
    <ligand>
        <name>carboxy-S-adenosyl-L-methionine</name>
        <dbReference type="ChEBI" id="CHEBI:134278"/>
    </ligand>
</feature>
<feature type="binding site" evidence="1">
    <location>
        <position position="196"/>
    </location>
    <ligand>
        <name>carboxy-S-adenosyl-L-methionine</name>
        <dbReference type="ChEBI" id="CHEBI:134278"/>
    </ligand>
</feature>
<feature type="binding site" evidence="1">
    <location>
        <position position="200"/>
    </location>
    <ligand>
        <name>carboxy-S-adenosyl-L-methionine</name>
        <dbReference type="ChEBI" id="CHEBI:134278"/>
    </ligand>
</feature>
<feature type="binding site" evidence="1">
    <location>
        <position position="315"/>
    </location>
    <ligand>
        <name>carboxy-S-adenosyl-L-methionine</name>
        <dbReference type="ChEBI" id="CHEBI:134278"/>
    </ligand>
</feature>
<keyword id="KW-0808">Transferase</keyword>
<keyword id="KW-0819">tRNA processing</keyword>
<comment type="function">
    <text evidence="1">Catalyzes carboxymethyl transfer from carboxy-S-adenosyl-L-methionine (Cx-SAM) to 5-hydroxyuridine (ho5U) to form 5-carboxymethoxyuridine (cmo5U) at position 34 in tRNAs.</text>
</comment>
<comment type="catalytic activity">
    <reaction evidence="1">
        <text>carboxy-S-adenosyl-L-methionine + 5-hydroxyuridine(34) in tRNA = 5-carboxymethoxyuridine(34) in tRNA + S-adenosyl-L-homocysteine + H(+)</text>
        <dbReference type="Rhea" id="RHEA:52848"/>
        <dbReference type="Rhea" id="RHEA-COMP:13381"/>
        <dbReference type="Rhea" id="RHEA-COMP:13383"/>
        <dbReference type="ChEBI" id="CHEBI:15378"/>
        <dbReference type="ChEBI" id="CHEBI:57856"/>
        <dbReference type="ChEBI" id="CHEBI:134278"/>
        <dbReference type="ChEBI" id="CHEBI:136877"/>
        <dbReference type="ChEBI" id="CHEBI:136879"/>
    </reaction>
</comment>
<comment type="subunit">
    <text evidence="1">Homotetramer.</text>
</comment>
<comment type="similarity">
    <text evidence="1">Belongs to the class I-like SAM-binding methyltransferase superfamily. CmoB family.</text>
</comment>
<protein>
    <recommendedName>
        <fullName evidence="1">tRNA U34 carboxymethyltransferase</fullName>
        <ecNumber evidence="1">2.5.1.-</ecNumber>
    </recommendedName>
</protein>
<organism>
    <name type="scientific">Shewanella sp. (strain MR-4)</name>
    <dbReference type="NCBI Taxonomy" id="60480"/>
    <lineage>
        <taxon>Bacteria</taxon>
        <taxon>Pseudomonadati</taxon>
        <taxon>Pseudomonadota</taxon>
        <taxon>Gammaproteobacteria</taxon>
        <taxon>Alteromonadales</taxon>
        <taxon>Shewanellaceae</taxon>
        <taxon>Shewanella</taxon>
    </lineage>
</organism>
<sequence length="330" mass="37824">MISFSSFYQQIADSNLQHWLETLPAILGKWQREHKHGNLPKWEKVLNKLHYPAPDRVDFVSSVTVGTGEQLTPGEKEKLENLLRLFMPWRKGPFHIHGIHIDTEWRSDWKWDRVSPHISPLQNRTVLDVGCGSGYHMWRMLGAGAKRVVGIDPSPLFLCQFEAVKRLSGENHPVHLLPLGIEELPPLDAFDTVFSMGVLYHRRSPIDHLLQLRDQLRMGGELVLETLVIDGDENAVLVPQDRYGKMNNVWFIPSVAALMLWLKKCDFTDIRCVDTDVTALAEQRRTDWMPNESLVEYLDPNDITKTIEGYPAPKRATIIAVKNQPNQDLT</sequence>
<proteinExistence type="inferred from homology"/>
<accession>Q0HIZ8</accession>
<dbReference type="EC" id="2.5.1.-" evidence="1"/>
<dbReference type="EMBL" id="CP000446">
    <property type="protein sequence ID" value="ABI38969.1"/>
    <property type="molecule type" value="Genomic_DNA"/>
</dbReference>
<dbReference type="RefSeq" id="WP_011622666.1">
    <property type="nucleotide sequence ID" value="NC_008321.1"/>
</dbReference>
<dbReference type="SMR" id="Q0HIZ8"/>
<dbReference type="KEGG" id="she:Shewmr4_1895"/>
<dbReference type="HOGENOM" id="CLU_052665_0_0_6"/>
<dbReference type="GO" id="GO:0008168">
    <property type="term" value="F:methyltransferase activity"/>
    <property type="evidence" value="ECO:0007669"/>
    <property type="project" value="TreeGrafter"/>
</dbReference>
<dbReference type="GO" id="GO:0016765">
    <property type="term" value="F:transferase activity, transferring alkyl or aryl (other than methyl) groups"/>
    <property type="evidence" value="ECO:0007669"/>
    <property type="project" value="UniProtKB-UniRule"/>
</dbReference>
<dbReference type="GO" id="GO:0002098">
    <property type="term" value="P:tRNA wobble uridine modification"/>
    <property type="evidence" value="ECO:0007669"/>
    <property type="project" value="InterPro"/>
</dbReference>
<dbReference type="CDD" id="cd02440">
    <property type="entry name" value="AdoMet_MTases"/>
    <property type="match status" value="1"/>
</dbReference>
<dbReference type="Gene3D" id="3.40.50.150">
    <property type="entry name" value="Vaccinia Virus protein VP39"/>
    <property type="match status" value="1"/>
</dbReference>
<dbReference type="HAMAP" id="MF_01590">
    <property type="entry name" value="tRNA_carboxymethyltr_CmoB"/>
    <property type="match status" value="1"/>
</dbReference>
<dbReference type="InterPro" id="IPR010017">
    <property type="entry name" value="CmoB"/>
</dbReference>
<dbReference type="InterPro" id="IPR027555">
    <property type="entry name" value="Mo5U34_MeTrfas-like"/>
</dbReference>
<dbReference type="InterPro" id="IPR029063">
    <property type="entry name" value="SAM-dependent_MTases_sf"/>
</dbReference>
<dbReference type="NCBIfam" id="NF011650">
    <property type="entry name" value="PRK15068.1"/>
    <property type="match status" value="1"/>
</dbReference>
<dbReference type="NCBIfam" id="TIGR00452">
    <property type="entry name" value="tRNA 5-methoxyuridine(34)/uridine 5-oxyacetic acid(34) synthase CmoB"/>
    <property type="match status" value="1"/>
</dbReference>
<dbReference type="PANTHER" id="PTHR43464">
    <property type="entry name" value="METHYLTRANSFERASE"/>
    <property type="match status" value="1"/>
</dbReference>
<dbReference type="PANTHER" id="PTHR43464:SF95">
    <property type="entry name" value="TRNA U34 CARBOXYMETHYLTRANSFERASE"/>
    <property type="match status" value="1"/>
</dbReference>
<dbReference type="Pfam" id="PF08003">
    <property type="entry name" value="Methyltransf_9"/>
    <property type="match status" value="1"/>
</dbReference>
<dbReference type="SUPFAM" id="SSF53335">
    <property type="entry name" value="S-adenosyl-L-methionine-dependent methyltransferases"/>
    <property type="match status" value="1"/>
</dbReference>
<name>CMOB_SHESM</name>
<gene>
    <name evidence="1" type="primary">cmoB</name>
    <name type="ordered locus">Shewmr4_1895</name>
</gene>